<dbReference type="EMBL" id="CP000743">
    <property type="protein sequence ID" value="ABR56976.1"/>
    <property type="molecule type" value="Genomic_DNA"/>
</dbReference>
<dbReference type="RefSeq" id="WP_011974108.1">
    <property type="nucleotide sequence ID" value="NC_009635.1"/>
</dbReference>
<dbReference type="SMR" id="A6UWV4"/>
<dbReference type="STRING" id="419665.Maeo_1400"/>
<dbReference type="GeneID" id="5327178"/>
<dbReference type="KEGG" id="mae:Maeo_1400"/>
<dbReference type="eggNOG" id="arCOG04090">
    <property type="taxonomic scope" value="Archaea"/>
</dbReference>
<dbReference type="HOGENOM" id="CLU_065464_0_0_2"/>
<dbReference type="OrthoDB" id="7144at2157"/>
<dbReference type="Proteomes" id="UP000001106">
    <property type="component" value="Chromosome"/>
</dbReference>
<dbReference type="GO" id="GO:0022625">
    <property type="term" value="C:cytosolic large ribosomal subunit"/>
    <property type="evidence" value="ECO:0007669"/>
    <property type="project" value="TreeGrafter"/>
</dbReference>
<dbReference type="GO" id="GO:0019843">
    <property type="term" value="F:rRNA binding"/>
    <property type="evidence" value="ECO:0007669"/>
    <property type="project" value="UniProtKB-UniRule"/>
</dbReference>
<dbReference type="GO" id="GO:0003735">
    <property type="term" value="F:structural constituent of ribosome"/>
    <property type="evidence" value="ECO:0007669"/>
    <property type="project" value="InterPro"/>
</dbReference>
<dbReference type="GO" id="GO:0002181">
    <property type="term" value="P:cytoplasmic translation"/>
    <property type="evidence" value="ECO:0007669"/>
    <property type="project" value="TreeGrafter"/>
</dbReference>
<dbReference type="FunFam" id="3.90.930.12:FF:000008">
    <property type="entry name" value="50S ribosomal protein L6"/>
    <property type="match status" value="1"/>
</dbReference>
<dbReference type="Gene3D" id="3.90.930.12">
    <property type="entry name" value="Ribosomal protein L6, alpha-beta domain"/>
    <property type="match status" value="2"/>
</dbReference>
<dbReference type="HAMAP" id="MF_01365_A">
    <property type="entry name" value="Ribosomal_uL6_A"/>
    <property type="match status" value="1"/>
</dbReference>
<dbReference type="InterPro" id="IPR000702">
    <property type="entry name" value="Ribosomal_uL6-like"/>
</dbReference>
<dbReference type="InterPro" id="IPR036789">
    <property type="entry name" value="Ribosomal_uL6-like_a/b-dom_sf"/>
</dbReference>
<dbReference type="InterPro" id="IPR020040">
    <property type="entry name" value="Ribosomal_uL6_a/b-dom"/>
</dbReference>
<dbReference type="InterPro" id="IPR019907">
    <property type="entry name" value="Ribosomal_uL6_arc"/>
</dbReference>
<dbReference type="InterPro" id="IPR002359">
    <property type="entry name" value="Ribosomal_uL6_CS2"/>
</dbReference>
<dbReference type="NCBIfam" id="NF004037">
    <property type="entry name" value="PRK05518.1"/>
    <property type="match status" value="1"/>
</dbReference>
<dbReference type="NCBIfam" id="TIGR03653">
    <property type="entry name" value="uL6_arch"/>
    <property type="match status" value="1"/>
</dbReference>
<dbReference type="PANTHER" id="PTHR11655:SF16">
    <property type="entry name" value="60S RIBOSOMAL PROTEIN L9"/>
    <property type="match status" value="1"/>
</dbReference>
<dbReference type="PANTHER" id="PTHR11655">
    <property type="entry name" value="60S/50S RIBOSOMAL PROTEIN L6/L9"/>
    <property type="match status" value="1"/>
</dbReference>
<dbReference type="Pfam" id="PF00347">
    <property type="entry name" value="Ribosomal_L6"/>
    <property type="match status" value="2"/>
</dbReference>
<dbReference type="PIRSF" id="PIRSF002162">
    <property type="entry name" value="Ribosomal_L6"/>
    <property type="match status" value="1"/>
</dbReference>
<dbReference type="SUPFAM" id="SSF56053">
    <property type="entry name" value="Ribosomal protein L6"/>
    <property type="match status" value="2"/>
</dbReference>
<dbReference type="PROSITE" id="PS00700">
    <property type="entry name" value="RIBOSOMAL_L6_2"/>
    <property type="match status" value="1"/>
</dbReference>
<accession>A6UWV4</accession>
<proteinExistence type="inferred from homology"/>
<comment type="function">
    <text evidence="1">This protein binds to the 23S rRNA, and is important in its secondary structure. It is located near the subunit interface in the base of the L7/L12 stalk, and near the tRNA binding site of the peptidyltransferase center.</text>
</comment>
<comment type="subunit">
    <text evidence="1">Part of the 50S ribosomal subunit.</text>
</comment>
<comment type="similarity">
    <text evidence="1">Belongs to the universal ribosomal protein uL6 family.</text>
</comment>
<protein>
    <recommendedName>
        <fullName evidence="1">Large ribosomal subunit protein uL6</fullName>
    </recommendedName>
    <alternativeName>
        <fullName evidence="2">50S ribosomal protein L6</fullName>
    </alternativeName>
</protein>
<organism>
    <name type="scientific">Methanococcus aeolicus (strain ATCC BAA-1280 / DSM 17508 / OCM 812 / Nankai-3)</name>
    <dbReference type="NCBI Taxonomy" id="419665"/>
    <lineage>
        <taxon>Archaea</taxon>
        <taxon>Methanobacteriati</taxon>
        <taxon>Methanobacteriota</taxon>
        <taxon>Methanomada group</taxon>
        <taxon>Methanococci</taxon>
        <taxon>Methanococcales</taxon>
        <taxon>Methanococcaceae</taxon>
        <taxon>Methanococcus</taxon>
    </lineage>
</organism>
<feature type="chain" id="PRO_1000055257" description="Large ribosomal subunit protein uL6">
    <location>
        <begin position="1"/>
        <end position="183"/>
    </location>
</feature>
<name>RL6_META3</name>
<sequence length="183" mass="20404">MPVAAIIREEIEIPESVTIEVINNEEVVVKAGGKELRRILSYPDVVIKKEDNKVVVESLYPRKKQAAIIGTFASHIKNIITGVSEGFEYKMKIRYAHFPMKISVKGNEVIIDNFLGEKHPRKATIMEGVKVKVSGEDVIVTGIDKEKTGQTAANIEQATRVRGRDTRVFQDGIYIVEKAGKVL</sequence>
<gene>
    <name evidence="1" type="primary">rpl6</name>
    <name type="ordered locus">Maeo_1400</name>
</gene>
<reference key="1">
    <citation type="submission" date="2007-06" db="EMBL/GenBank/DDBJ databases">
        <title>Complete sequence of Methanococcus aeolicus Nankai-3.</title>
        <authorList>
            <consortium name="US DOE Joint Genome Institute"/>
            <person name="Copeland A."/>
            <person name="Lucas S."/>
            <person name="Lapidus A."/>
            <person name="Barry K."/>
            <person name="Glavina del Rio T."/>
            <person name="Dalin E."/>
            <person name="Tice H."/>
            <person name="Pitluck S."/>
            <person name="Chain P."/>
            <person name="Malfatti S."/>
            <person name="Shin M."/>
            <person name="Vergez L."/>
            <person name="Schmutz J."/>
            <person name="Larimer F."/>
            <person name="Land M."/>
            <person name="Hauser L."/>
            <person name="Kyrpides N."/>
            <person name="Lykidis A."/>
            <person name="Sieprawska-Lupa M."/>
            <person name="Whitman W.B."/>
            <person name="Richardson P."/>
        </authorList>
    </citation>
    <scope>NUCLEOTIDE SEQUENCE [LARGE SCALE GENOMIC DNA]</scope>
    <source>
        <strain>ATCC BAA-1280 / DSM 17508 / OCM 812 / Nankai-3</strain>
    </source>
</reference>
<evidence type="ECO:0000255" key="1">
    <source>
        <dbReference type="HAMAP-Rule" id="MF_01365"/>
    </source>
</evidence>
<evidence type="ECO:0000305" key="2"/>
<keyword id="KW-0687">Ribonucleoprotein</keyword>
<keyword id="KW-0689">Ribosomal protein</keyword>
<keyword id="KW-0694">RNA-binding</keyword>
<keyword id="KW-0699">rRNA-binding</keyword>